<dbReference type="EMBL" id="AF065433">
    <property type="protein sequence ID" value="AAC23595.1"/>
    <property type="molecule type" value="mRNA"/>
</dbReference>
<dbReference type="EMBL" id="AF065431">
    <property type="protein sequence ID" value="AAC23593.1"/>
    <property type="molecule type" value="mRNA"/>
</dbReference>
<dbReference type="EMBL" id="AF065432">
    <property type="protein sequence ID" value="AAC23594.1"/>
    <property type="molecule type" value="mRNA"/>
</dbReference>
<dbReference type="EMBL" id="AF136927">
    <property type="protein sequence ID" value="AAD26594.1"/>
    <property type="molecule type" value="mRNA"/>
</dbReference>
<dbReference type="RefSeq" id="NP_072134.1">
    <property type="nucleotide sequence ID" value="NM_022612.1"/>
</dbReference>
<dbReference type="RefSeq" id="NP_741985.1">
    <molecule id="O88498-1"/>
    <property type="nucleotide sequence ID" value="NM_171988.4"/>
</dbReference>
<dbReference type="RefSeq" id="NP_741986.1">
    <property type="nucleotide sequence ID" value="NM_171989.1"/>
</dbReference>
<dbReference type="SMR" id="O88498"/>
<dbReference type="BioGRID" id="249128">
    <property type="interactions" value="4"/>
</dbReference>
<dbReference type="ComplexPortal" id="CPX-2026">
    <property type="entry name" value="BIM:BCL-XL complex"/>
</dbReference>
<dbReference type="ComplexPortal" id="CPX-2035">
    <property type="entry name" value="BIM:BCL-2 complex"/>
</dbReference>
<dbReference type="ELM" id="O88498"/>
<dbReference type="FunCoup" id="O88498">
    <property type="interactions" value="858"/>
</dbReference>
<dbReference type="IntAct" id="O88498">
    <property type="interactions" value="5"/>
</dbReference>
<dbReference type="STRING" id="10116.ENSRNOP00000039006"/>
<dbReference type="iPTMnet" id="O88498"/>
<dbReference type="PhosphoSitePlus" id="O88498"/>
<dbReference type="PaxDb" id="10116-ENSRNOP00000039006"/>
<dbReference type="GeneID" id="64547"/>
<dbReference type="KEGG" id="rno:64547"/>
<dbReference type="UCSC" id="RGD:628774">
    <molecule id="O88498-1"/>
    <property type="organism name" value="rat"/>
</dbReference>
<dbReference type="AGR" id="RGD:628774"/>
<dbReference type="CTD" id="10018"/>
<dbReference type="RGD" id="628774">
    <property type="gene designation" value="Bcl2l11"/>
</dbReference>
<dbReference type="VEuPathDB" id="HostDB:ENSRNOG00000016551"/>
<dbReference type="eggNOG" id="ENOG502S0DF">
    <property type="taxonomic scope" value="Eukaryota"/>
</dbReference>
<dbReference type="HOGENOM" id="CLU_104244_0_0_1"/>
<dbReference type="InParanoid" id="O88498"/>
<dbReference type="OrthoDB" id="42916at9989"/>
<dbReference type="PhylomeDB" id="O88498"/>
<dbReference type="Reactome" id="R-RNO-111446">
    <property type="pathway name" value="Activation of BIM and translocation to mitochondria"/>
</dbReference>
<dbReference type="Reactome" id="R-RNO-111453">
    <property type="pathway name" value="BH3-only proteins associate with and inactivate anti-apoptotic BCL-2 members"/>
</dbReference>
<dbReference type="Reactome" id="R-RNO-193648">
    <property type="pathway name" value="NRAGE signals death through JNK"/>
</dbReference>
<dbReference type="PRO" id="PR:O88498"/>
<dbReference type="Proteomes" id="UP000002494">
    <property type="component" value="Chromosome 3"/>
</dbReference>
<dbReference type="Bgee" id="ENSRNOG00000016551">
    <property type="expression patterns" value="Expressed in thymus and 18 other cell types or tissues"/>
</dbReference>
<dbReference type="GO" id="GO:0097136">
    <property type="term" value="C:Bcl-2 family protein complex"/>
    <property type="evidence" value="ECO:0000266"/>
    <property type="project" value="RGD"/>
</dbReference>
<dbReference type="GO" id="GO:0005737">
    <property type="term" value="C:cytoplasm"/>
    <property type="evidence" value="ECO:0000266"/>
    <property type="project" value="RGD"/>
</dbReference>
<dbReference type="GO" id="GO:0005829">
    <property type="term" value="C:cytosol"/>
    <property type="evidence" value="ECO:0000304"/>
    <property type="project" value="Reactome"/>
</dbReference>
<dbReference type="GO" id="GO:0043231">
    <property type="term" value="C:intracellular membrane-bounded organelle"/>
    <property type="evidence" value="ECO:0000266"/>
    <property type="project" value="RGD"/>
</dbReference>
<dbReference type="GO" id="GO:0016020">
    <property type="term" value="C:membrane"/>
    <property type="evidence" value="ECO:0000266"/>
    <property type="project" value="RGD"/>
</dbReference>
<dbReference type="GO" id="GO:0005739">
    <property type="term" value="C:mitochondrion"/>
    <property type="evidence" value="ECO:0000266"/>
    <property type="project" value="RGD"/>
</dbReference>
<dbReference type="GO" id="GO:0008017">
    <property type="term" value="F:microtubule binding"/>
    <property type="evidence" value="ECO:0000266"/>
    <property type="project" value="RGD"/>
</dbReference>
<dbReference type="GO" id="GO:0019901">
    <property type="term" value="F:protein kinase binding"/>
    <property type="evidence" value="ECO:0000266"/>
    <property type="project" value="RGD"/>
</dbReference>
<dbReference type="GO" id="GO:1902263">
    <property type="term" value="P:apoptotic process involved in embryonic digit morphogenesis"/>
    <property type="evidence" value="ECO:0000266"/>
    <property type="project" value="RGD"/>
</dbReference>
<dbReference type="GO" id="GO:0001782">
    <property type="term" value="P:B cell homeostasis"/>
    <property type="evidence" value="ECO:0000266"/>
    <property type="project" value="RGD"/>
</dbReference>
<dbReference type="GO" id="GO:0007160">
    <property type="term" value="P:cell-matrix adhesion"/>
    <property type="evidence" value="ECO:0000266"/>
    <property type="project" value="RGD"/>
</dbReference>
<dbReference type="GO" id="GO:1904646">
    <property type="term" value="P:cellular response to amyloid-beta"/>
    <property type="evidence" value="ECO:0000270"/>
    <property type="project" value="RGD"/>
</dbReference>
<dbReference type="GO" id="GO:0071392">
    <property type="term" value="P:cellular response to estradiol stimulus"/>
    <property type="evidence" value="ECO:0000270"/>
    <property type="project" value="RGD"/>
</dbReference>
<dbReference type="GO" id="GO:1990090">
    <property type="term" value="P:cellular response to nerve growth factor stimulus"/>
    <property type="evidence" value="ECO:0000270"/>
    <property type="project" value="RGD"/>
</dbReference>
<dbReference type="GO" id="GO:0048066">
    <property type="term" value="P:developmental pigmentation"/>
    <property type="evidence" value="ECO:0000266"/>
    <property type="project" value="RGD"/>
</dbReference>
<dbReference type="GO" id="GO:0043583">
    <property type="term" value="P:ear development"/>
    <property type="evidence" value="ECO:0000266"/>
    <property type="project" value="RGD"/>
</dbReference>
<dbReference type="GO" id="GO:0097192">
    <property type="term" value="P:extrinsic apoptotic signaling pathway in absence of ligand"/>
    <property type="evidence" value="ECO:0000266"/>
    <property type="project" value="RGD"/>
</dbReference>
<dbReference type="GO" id="GO:0001701">
    <property type="term" value="P:in utero embryonic development"/>
    <property type="evidence" value="ECO:0000266"/>
    <property type="project" value="RGD"/>
</dbReference>
<dbReference type="GO" id="GO:0008630">
    <property type="term" value="P:intrinsic apoptotic signaling pathway in response to DNA damage"/>
    <property type="evidence" value="ECO:0000266"/>
    <property type="project" value="RGD"/>
</dbReference>
<dbReference type="GO" id="GO:0001822">
    <property type="term" value="P:kidney development"/>
    <property type="evidence" value="ECO:0000266"/>
    <property type="project" value="RGD"/>
</dbReference>
<dbReference type="GO" id="GO:0001776">
    <property type="term" value="P:leukocyte homeostasis"/>
    <property type="evidence" value="ECO:0000266"/>
    <property type="project" value="RGD"/>
</dbReference>
<dbReference type="GO" id="GO:0070227">
    <property type="term" value="P:lymphocyte apoptotic process"/>
    <property type="evidence" value="ECO:0000266"/>
    <property type="project" value="RGD"/>
</dbReference>
<dbReference type="GO" id="GO:0002260">
    <property type="term" value="P:lymphocyte homeostasis"/>
    <property type="evidence" value="ECO:0000266"/>
    <property type="project" value="RGD"/>
</dbReference>
<dbReference type="GO" id="GO:0008584">
    <property type="term" value="P:male gonad development"/>
    <property type="evidence" value="ECO:0000266"/>
    <property type="project" value="RGD"/>
</dbReference>
<dbReference type="GO" id="GO:0030879">
    <property type="term" value="P:mammary gland development"/>
    <property type="evidence" value="ECO:0000266"/>
    <property type="project" value="RGD"/>
</dbReference>
<dbReference type="GO" id="GO:0007127">
    <property type="term" value="P:meiosis I"/>
    <property type="evidence" value="ECO:0000318"/>
    <property type="project" value="GO_Central"/>
</dbReference>
<dbReference type="GO" id="GO:0002262">
    <property type="term" value="P:myeloid cell homeostasis"/>
    <property type="evidence" value="ECO:0000266"/>
    <property type="project" value="RGD"/>
</dbReference>
<dbReference type="GO" id="GO:0042475">
    <property type="term" value="P:odontogenesis of dentin-containing tooth"/>
    <property type="evidence" value="ECO:0000266"/>
    <property type="project" value="RGD"/>
</dbReference>
<dbReference type="GO" id="GO:0043065">
    <property type="term" value="P:positive regulation of apoptotic process"/>
    <property type="evidence" value="ECO:0000315"/>
    <property type="project" value="RGD"/>
</dbReference>
<dbReference type="GO" id="GO:0034263">
    <property type="term" value="P:positive regulation of autophagy in response to ER overload"/>
    <property type="evidence" value="ECO:0000315"/>
    <property type="project" value="RGD"/>
</dbReference>
<dbReference type="GO" id="GO:0045787">
    <property type="term" value="P:positive regulation of cell cycle"/>
    <property type="evidence" value="ECO:0000266"/>
    <property type="project" value="RGD"/>
</dbReference>
<dbReference type="GO" id="GO:2000271">
    <property type="term" value="P:positive regulation of fibroblast apoptotic process"/>
    <property type="evidence" value="ECO:0000266"/>
    <property type="project" value="RGD"/>
</dbReference>
<dbReference type="GO" id="GO:0070230">
    <property type="term" value="P:positive regulation of lymphocyte apoptotic process"/>
    <property type="evidence" value="ECO:0000266"/>
    <property type="project" value="RGD"/>
</dbReference>
<dbReference type="GO" id="GO:1902110">
    <property type="term" value="P:positive regulation of mitochondrial membrane permeability involved in apoptotic process"/>
    <property type="evidence" value="ECO:0000266"/>
    <property type="project" value="RGD"/>
</dbReference>
<dbReference type="GO" id="GO:0043525">
    <property type="term" value="P:positive regulation of neuron apoptotic process"/>
    <property type="evidence" value="ECO:0000266"/>
    <property type="project" value="RGD"/>
</dbReference>
<dbReference type="GO" id="GO:0031334">
    <property type="term" value="P:positive regulation of protein-containing complex assembly"/>
    <property type="evidence" value="ECO:0000266"/>
    <property type="project" value="RGD"/>
</dbReference>
<dbReference type="GO" id="GO:0090200">
    <property type="term" value="P:positive regulation of release of cytochrome c from mitochondria"/>
    <property type="evidence" value="ECO:0000266"/>
    <property type="project" value="RGD"/>
</dbReference>
<dbReference type="GO" id="GO:0070234">
    <property type="term" value="P:positive regulation of T cell apoptotic process"/>
    <property type="evidence" value="ECO:0000266"/>
    <property type="project" value="RGD"/>
</dbReference>
<dbReference type="GO" id="GO:0009791">
    <property type="term" value="P:post-embryonic development"/>
    <property type="evidence" value="ECO:0000266"/>
    <property type="project" value="RGD"/>
</dbReference>
<dbReference type="GO" id="GO:0042981">
    <property type="term" value="P:regulation of apoptotic process"/>
    <property type="evidence" value="ECO:0000266"/>
    <property type="project" value="RGD"/>
</dbReference>
<dbReference type="GO" id="GO:0048070">
    <property type="term" value="P:regulation of developmental pigmentation"/>
    <property type="evidence" value="ECO:0000266"/>
    <property type="project" value="RGD"/>
</dbReference>
<dbReference type="GO" id="GO:0046620">
    <property type="term" value="P:regulation of organ growth"/>
    <property type="evidence" value="ECO:0000266"/>
    <property type="project" value="RGD"/>
</dbReference>
<dbReference type="GO" id="GO:0034976">
    <property type="term" value="P:response to endoplasmic reticulum stress"/>
    <property type="evidence" value="ECO:0000266"/>
    <property type="project" value="RGD"/>
</dbReference>
<dbReference type="GO" id="GO:0007283">
    <property type="term" value="P:spermatogenesis"/>
    <property type="evidence" value="ECO:0000266"/>
    <property type="project" value="RGD"/>
</dbReference>
<dbReference type="GO" id="GO:0048536">
    <property type="term" value="P:spleen development"/>
    <property type="evidence" value="ECO:0000266"/>
    <property type="project" value="RGD"/>
</dbReference>
<dbReference type="GO" id="GO:0070231">
    <property type="term" value="P:T cell apoptotic process"/>
    <property type="evidence" value="ECO:0000266"/>
    <property type="project" value="RGD"/>
</dbReference>
<dbReference type="GO" id="GO:0043029">
    <property type="term" value="P:T cell homeostasis"/>
    <property type="evidence" value="ECO:0000266"/>
    <property type="project" value="RGD"/>
</dbReference>
<dbReference type="GO" id="GO:0070242">
    <property type="term" value="P:thymocyte apoptotic process"/>
    <property type="evidence" value="ECO:0000266"/>
    <property type="project" value="RGD"/>
</dbReference>
<dbReference type="GO" id="GO:0048538">
    <property type="term" value="P:thymus development"/>
    <property type="evidence" value="ECO:0000266"/>
    <property type="project" value="RGD"/>
</dbReference>
<dbReference type="GO" id="GO:0035148">
    <property type="term" value="P:tube formation"/>
    <property type="evidence" value="ECO:0000266"/>
    <property type="project" value="RGD"/>
</dbReference>
<dbReference type="InterPro" id="IPR014771">
    <property type="entry name" value="Apoptosis_Bim_N"/>
</dbReference>
<dbReference type="InterPro" id="IPR017288">
    <property type="entry name" value="Bcl-2-like_11"/>
</dbReference>
<dbReference type="InterPro" id="IPR015040">
    <property type="entry name" value="Bcl-x_interacting_BH3_dom"/>
</dbReference>
<dbReference type="InterPro" id="IPR052133">
    <property type="entry name" value="Immune_Signaling-Apoptosis_Reg"/>
</dbReference>
<dbReference type="PANTHER" id="PTHR12044:SF9">
    <property type="entry name" value="BCL-2-LIKE PROTEIN 11"/>
    <property type="match status" value="1"/>
</dbReference>
<dbReference type="PANTHER" id="PTHR12044">
    <property type="entry name" value="BCL2 INTERACTING MEDIATOR OF CELL DEATH"/>
    <property type="match status" value="1"/>
</dbReference>
<dbReference type="Pfam" id="PF08945">
    <property type="entry name" value="Bclx_interact"/>
    <property type="match status" value="1"/>
</dbReference>
<dbReference type="Pfam" id="PF06773">
    <property type="entry name" value="Bim_N"/>
    <property type="match status" value="1"/>
</dbReference>
<dbReference type="PIRSF" id="PIRSF037827">
    <property type="entry name" value="Bcl-2-like_p11"/>
    <property type="match status" value="1"/>
</dbReference>
<organism>
    <name type="scientific">Rattus norvegicus</name>
    <name type="common">Rat</name>
    <dbReference type="NCBI Taxonomy" id="10116"/>
    <lineage>
        <taxon>Eukaryota</taxon>
        <taxon>Metazoa</taxon>
        <taxon>Chordata</taxon>
        <taxon>Craniata</taxon>
        <taxon>Vertebrata</taxon>
        <taxon>Euteleostomi</taxon>
        <taxon>Mammalia</taxon>
        <taxon>Eutheria</taxon>
        <taxon>Euarchontoglires</taxon>
        <taxon>Glires</taxon>
        <taxon>Rodentia</taxon>
        <taxon>Myomorpha</taxon>
        <taxon>Muroidea</taxon>
        <taxon>Muridae</taxon>
        <taxon>Murinae</taxon>
        <taxon>Rattus</taxon>
    </lineage>
</organism>
<proteinExistence type="evidence at protein level"/>
<gene>
    <name type="primary">Bcl2l11</name>
    <name type="synonym">Bim</name>
    <name type="synonym">Bod</name>
</gene>
<reference key="1">
    <citation type="journal article" date="1998" name="Mol. Endocrinol.">
        <title>BOD (Bcl-2-related ovarian death gene) is an ovarian BH3 domain-containing proapoptotic Bcl-2 protein capable of dimerization with diverse antiapoptotic Bcl-2 members.</title>
        <authorList>
            <person name="Hsu S.Y."/>
            <person name="Lin P."/>
            <person name="Hsueh A.J.W."/>
        </authorList>
    </citation>
    <scope>NUCLEOTIDE SEQUENCE [MRNA]</scope>
    <scope>FUNCTION</scope>
    <scope>INTERACTION WITH BCL-2 PROTEINS</scope>
    <scope>TISSUE SPECIFICITY (ISOFORMS BOD-L; BOD-M AND BOD-S)</scope>
    <source>
        <tissue>Ovary</tissue>
    </source>
</reference>
<reference key="2">
    <citation type="submission" date="1999-03" db="EMBL/GenBank/DDBJ databases">
        <title>Cloning of rat bimEL and bimL, and their differential expression in ischemia and normal rat brain.</title>
        <authorList>
            <person name="Chen D."/>
            <person name="Simon R.P."/>
            <person name="Chen J."/>
        </authorList>
    </citation>
    <scope>NUCLEOTIDE SEQUENCE [MRNA] (ISOFORM BIML)</scope>
</reference>
<reference key="3">
    <citation type="journal article" date="2011" name="J. Biol. Chem.">
        <title>Identification of a novel Bcl-2-interacting mediator of cell death (Bim) E3 ligase, tripartite motif-containing protein 2 (TRIM2), and its role in rapid ischemic tolerance-induced neuroprotection.</title>
        <authorList>
            <person name="Thompson S."/>
            <person name="Pearson A.N."/>
            <person name="Ashley M.D."/>
            <person name="Jessick V."/>
            <person name="Murphy B.M."/>
            <person name="Gafken P."/>
            <person name="Henshall D.C."/>
            <person name="Morris K.T."/>
            <person name="Simon R.P."/>
            <person name="Meller R."/>
        </authorList>
    </citation>
    <scope>INTERACTION WITH DYNLL1; TRIM2 AND YWHAZ</scope>
    <scope>UBIQUITINATION</scope>
</reference>
<reference key="4">
    <citation type="journal article" date="2012" name="Nat. Commun.">
        <title>Quantitative maps of protein phosphorylation sites across 14 different rat organs and tissues.</title>
        <authorList>
            <person name="Lundby A."/>
            <person name="Secher A."/>
            <person name="Lage K."/>
            <person name="Nordsborg N.B."/>
            <person name="Dmytriyev A."/>
            <person name="Lundby C."/>
            <person name="Olsen J.V."/>
        </authorList>
    </citation>
    <scope>PHOSPHORYLATION [LARGE SCALE ANALYSIS] AT SER-73 AND SER-83</scope>
    <scope>IDENTIFICATION BY MASS SPECTROMETRY [LARGE SCALE ANALYSIS]</scope>
</reference>
<keyword id="KW-0024">Alternative initiation</keyword>
<keyword id="KW-0025">Alternative splicing</keyword>
<keyword id="KW-0053">Apoptosis</keyword>
<keyword id="KW-0472">Membrane</keyword>
<keyword id="KW-0496">Mitochondrion</keyword>
<keyword id="KW-0597">Phosphoprotein</keyword>
<keyword id="KW-1185">Reference proteome</keyword>
<keyword id="KW-0832">Ubl conjugation</keyword>
<feature type="chain" id="PRO_0000002814" description="Bcl-2-like protein 11">
    <location>
        <begin position="1"/>
        <end position="196"/>
    </location>
</feature>
<feature type="region of interest" description="Disordered" evidence="4">
    <location>
        <begin position="1"/>
        <end position="68"/>
    </location>
</feature>
<feature type="region of interest" description="Disordered" evidence="4">
    <location>
        <begin position="90"/>
        <end position="114"/>
    </location>
</feature>
<feature type="short sequence motif" description="BH3">
    <location>
        <begin position="146"/>
        <end position="160"/>
    </location>
</feature>
<feature type="compositionally biased region" description="Polar residues" evidence="4">
    <location>
        <begin position="34"/>
        <end position="43"/>
    </location>
</feature>
<feature type="modified residue" description="Phosphoserine; by MAPK" evidence="2">
    <location>
        <position position="65"/>
    </location>
</feature>
<feature type="modified residue" description="Phosphoserine" evidence="9">
    <location>
        <position position="73"/>
    </location>
</feature>
<feature type="modified residue" description="Phosphoserine" evidence="9">
    <location>
        <position position="83"/>
    </location>
</feature>
<feature type="modified residue" description="Phosphoserine" evidence="2">
    <location>
        <position position="90"/>
    </location>
</feature>
<feature type="splice variant" id="VSP_018668" description="In isoform BOD-S." evidence="8">
    <location>
        <begin position="1"/>
        <end position="103"/>
    </location>
</feature>
<feature type="splice variant" id="VSP_000539" description="In isoform BOD-M." evidence="8">
    <location>
        <begin position="42"/>
        <end position="127"/>
    </location>
</feature>
<feature type="splice variant" id="VSP_000538" description="In isoform BimL." evidence="7">
    <location>
        <begin position="42"/>
        <end position="97"/>
    </location>
</feature>
<feature type="sequence conflict" description="In Ref. 1; AAC23594." evidence="8" ref="1">
    <original>E</original>
    <variation>D</variation>
    <location>
        <position position="136"/>
    </location>
</feature>
<protein>
    <recommendedName>
        <fullName>Bcl-2-like protein 11</fullName>
        <shortName>Bcl2-L-11</shortName>
    </recommendedName>
    <alternativeName>
        <fullName>Bcl-2-related ovarian death protein</fullName>
    </alternativeName>
    <alternativeName>
        <fullName>Bcl2-interacting mediator of cell death</fullName>
    </alternativeName>
</protein>
<accession>O88498</accession>
<accession>O88497</accession>
<accession>Q9WUI8</accession>
<evidence type="ECO:0000250" key="1"/>
<evidence type="ECO:0000250" key="2">
    <source>
        <dbReference type="UniProtKB" id="O43521"/>
    </source>
</evidence>
<evidence type="ECO:0000250" key="3">
    <source>
        <dbReference type="UniProtKB" id="O54918"/>
    </source>
</evidence>
<evidence type="ECO:0000256" key="4">
    <source>
        <dbReference type="SAM" id="MobiDB-lite"/>
    </source>
</evidence>
<evidence type="ECO:0000269" key="5">
    <source>
    </source>
</evidence>
<evidence type="ECO:0000269" key="6">
    <source>
    </source>
</evidence>
<evidence type="ECO:0000303" key="7">
    <source ref="2"/>
</evidence>
<evidence type="ECO:0000305" key="8"/>
<evidence type="ECO:0007744" key="9">
    <source>
    </source>
</evidence>
<comment type="function">
    <text evidence="6">Induces apoptosis and anoikis.</text>
</comment>
<comment type="subunit">
    <text evidence="2 3 5 6">Forms heterodimers with a number of antiapoptotic Bcl-2 proteins, including MCL1, BCL2, BCL2L1 isoform Bcl-X(L), BCL2A1/BFL-1, and BCL2L2/BCLW. Does not heterodimerize with proapoptotic proteins such as BAD, BOK or BAK (PubMed:9731710). Identified in a complex containing BCL2L11, DYNLL1 and BCL2L1 isoform Bcl-X(L); BH3 integrity is required for BCL2L1-binding. Interacts with YWHAZ. When phosphorylated, interacts with TRIM2; this interaction is associated with ubiquitination and degradation (PubMed:21478148). Interacts (via BH3) with MCL1; this interaction may sequester BCL2L11 and prevent its pro-apoptotic activity (PubMed:9731710). When phosphorylated, isoform BimEL interacts with USP27X; this interaction leads to BCL2L11 deubiquitination and stabilization (By similarity). Interacts with GIMAP5 (By similarity). Interacts with BCL2L10/BCL-B (By similarity).</text>
</comment>
<comment type="subcellular location">
    <subcellularLocation>
        <location>Membrane</location>
        <topology>Peripheral membrane protein</topology>
    </subcellularLocation>
    <subcellularLocation>
        <location evidence="1">Mitochondrion</location>
    </subcellularLocation>
    <text evidence="1">Associated with intracytoplasmic membranes.</text>
</comment>
<comment type="alternative products">
    <event type="alternative splicing"/>
    <event type="alternative initiation"/>
    <isoform>
        <id>O88498-1</id>
        <name>BOD-L</name>
        <sequence type="displayed"/>
    </isoform>
    <isoform>
        <id>O88498-2</id>
        <name>BimL</name>
        <sequence type="described" ref="VSP_000538"/>
    </isoform>
    <isoform>
        <id>O88498-3</id>
        <name>BOD-M</name>
        <sequence type="described" ref="VSP_000539"/>
    </isoform>
    <isoform>
        <id>O88498-4</id>
        <name>BOD-S</name>
        <sequence type="described" ref="VSP_018668"/>
    </isoform>
</comment>
<comment type="tissue specificity">
    <text>Widely expressed.</text>
</comment>
<comment type="domain">
    <text evidence="3">The BH3 motif is required for the interaction with Bcl-2 proteins and cytotoxicity.</text>
</comment>
<comment type="PTM">
    <text evidence="3">Phosphorylation at Ser-65 by MAPK1/MAPK3 leads interaction with TRIM2 and ubiquitination, followed by proteasomal degradation. Deubiquitination catalyzed by USP27X stabilizes the protein.</text>
</comment>
<comment type="PTM">
    <text evidence="3 5">Ubiquitination by TRIM2 following phosphorylation by MAPK1/MAPK3 leads to proteasomal degradation (PubMed:21478148). Conversely, deubiquitination catalyzed by USP27X stabilizes the protein (By similarity).</text>
</comment>
<comment type="miscellaneous">
    <molecule>Isoform BOD-S</molecule>
    <text evidence="8">Produced by alternative initiation at Met-104 of isoform BOD-L.</text>
</comment>
<comment type="similarity">
    <text evidence="8">Belongs to the Bcl-2 family.</text>
</comment>
<sequence length="196" mass="22056">MAKQPSDVNSECDREGGQLQPAERPPQLRPGAPTSLQTESQGNPDGEGDRCPHGSPQGPLAPPASPGPFATRSPLFIFVRRSSLLSRSSSGYFSFDTDRSPAPMSCDKSTQTPSPPCQAFNHYLSAMASIRQSQEEPEDLRPEIRIAQELRRIGDEFNETYTRRAFANDYREAEDHPQMVILQLLRFIFRLVWRRH</sequence>
<name>B2L11_RAT</name>